<protein>
    <recommendedName>
        <fullName evidence="1">Chaperone protein DnaK</fullName>
    </recommendedName>
    <alternativeName>
        <fullName evidence="1">HSP70</fullName>
    </alternativeName>
    <alternativeName>
        <fullName evidence="1">Heat shock 70 kDa protein</fullName>
    </alternativeName>
    <alternativeName>
        <fullName evidence="1">Heat shock protein 70</fullName>
    </alternativeName>
</protein>
<comment type="function">
    <text evidence="1">Acts as a chaperone.</text>
</comment>
<comment type="induction">
    <text evidence="1">By stress conditions e.g. heat shock.</text>
</comment>
<comment type="similarity">
    <text evidence="1">Belongs to the heat shock protein 70 family.</text>
</comment>
<feature type="chain" id="PRO_0000078537" description="Chaperone protein DnaK">
    <location>
        <begin position="1"/>
        <end position="610"/>
    </location>
</feature>
<feature type="region of interest" description="Disordered" evidence="2">
    <location>
        <begin position="525"/>
        <end position="544"/>
    </location>
</feature>
<feature type="region of interest" description="Disordered" evidence="2">
    <location>
        <begin position="576"/>
        <end position="610"/>
    </location>
</feature>
<feature type="compositionally biased region" description="Basic and acidic residues" evidence="2">
    <location>
        <begin position="529"/>
        <end position="542"/>
    </location>
</feature>
<feature type="compositionally biased region" description="Low complexity" evidence="2">
    <location>
        <begin position="576"/>
        <end position="592"/>
    </location>
</feature>
<feature type="compositionally biased region" description="Basic and acidic residues" evidence="2">
    <location>
        <begin position="599"/>
        <end position="610"/>
    </location>
</feature>
<feature type="modified residue" description="Phosphothreonine; by autocatalysis" evidence="1">
    <location>
        <position position="173"/>
    </location>
</feature>
<gene>
    <name evidence="1" type="primary">dnaK</name>
    <name type="ordered locus">SAV1580</name>
</gene>
<keyword id="KW-0067">ATP-binding</keyword>
<keyword id="KW-0143">Chaperone</keyword>
<keyword id="KW-0547">Nucleotide-binding</keyword>
<keyword id="KW-0597">Phosphoprotein</keyword>
<keyword id="KW-0346">Stress response</keyword>
<sequence>MSKIIGIDLGTTNSCVTVLEGDEPKVIQNPEGSRTTPSVVAFKNGETQVGEVAKRQAITNPNTVQSIKRHMGTDYKVDIEGKSYTPQEISAMILQNLKNTAESYLGEKVDKAVITVPAYFNDAERQATKDAGKIAGLEVERIINEPTAAALAYGLDKTDKDEKVLVFDLGGGTFDVSILELGDGVFEVLSTAGDNKLGGDDFDQVIIDYLVAEFKKENGVDLSQDKMALQRLKDAAEKAKKDLSGVSQTQISLPFISAGENGPLHLEVNLTRSKFEELSDSLIRRTMEPTRQAMKDAGLTNSDIDEVILVGGSTRIPAVQEAVKKEIGKEPNKGVNPDEVVAMGAAIQGGVITGDVKDVVLLDVTPLSLGIEILGGRMNTLIERNTTIPTSKSQIYSTAVDNQPSVDVHVLQGERPMAADNKTLGRFQLTDIPPAERGKPQIEVTFDIDKNGIVNVTAKDLGTNKEQRITIQSSSSLSDEEIDRMVKDAEVNAEADKKRREEVDLRNEADSLVFQVEKTLTDLGENIGEEDKKSAEEKKDALKTALEGQDIEDIKSKKEELEKVIQELSAKVYEQAAQQQQQAQGANAGQNNDSTVEDAEFKEVKDDDKK</sequence>
<evidence type="ECO:0000255" key="1">
    <source>
        <dbReference type="HAMAP-Rule" id="MF_00332"/>
    </source>
</evidence>
<evidence type="ECO:0000256" key="2">
    <source>
        <dbReference type="SAM" id="MobiDB-lite"/>
    </source>
</evidence>
<name>DNAK_STAAM</name>
<dbReference type="EMBL" id="BA000017">
    <property type="protein sequence ID" value="BAB57742.1"/>
    <property type="molecule type" value="Genomic_DNA"/>
</dbReference>
<dbReference type="RefSeq" id="WP_000034716.1">
    <property type="nucleotide sequence ID" value="NC_002758.2"/>
</dbReference>
<dbReference type="SMR" id="P64407"/>
<dbReference type="KEGG" id="sav:SAV1580"/>
<dbReference type="HOGENOM" id="CLU_005965_2_4_9"/>
<dbReference type="PhylomeDB" id="P64407"/>
<dbReference type="Proteomes" id="UP000002481">
    <property type="component" value="Chromosome"/>
</dbReference>
<dbReference type="GO" id="GO:0005524">
    <property type="term" value="F:ATP binding"/>
    <property type="evidence" value="ECO:0007669"/>
    <property type="project" value="UniProtKB-UniRule"/>
</dbReference>
<dbReference type="GO" id="GO:0140662">
    <property type="term" value="F:ATP-dependent protein folding chaperone"/>
    <property type="evidence" value="ECO:0007669"/>
    <property type="project" value="InterPro"/>
</dbReference>
<dbReference type="GO" id="GO:0051082">
    <property type="term" value="F:unfolded protein binding"/>
    <property type="evidence" value="ECO:0007669"/>
    <property type="project" value="InterPro"/>
</dbReference>
<dbReference type="CDD" id="cd10234">
    <property type="entry name" value="ASKHA_NBD_HSP70_DnaK-like"/>
    <property type="match status" value="1"/>
</dbReference>
<dbReference type="FunFam" id="2.60.34.10:FF:000014">
    <property type="entry name" value="Chaperone protein DnaK HSP70"/>
    <property type="match status" value="1"/>
</dbReference>
<dbReference type="FunFam" id="1.20.1270.10:FF:000001">
    <property type="entry name" value="Molecular chaperone DnaK"/>
    <property type="match status" value="1"/>
</dbReference>
<dbReference type="FunFam" id="3.30.420.40:FF:000071">
    <property type="entry name" value="Molecular chaperone DnaK"/>
    <property type="match status" value="1"/>
</dbReference>
<dbReference type="FunFam" id="3.90.640.10:FF:000003">
    <property type="entry name" value="Molecular chaperone DnaK"/>
    <property type="match status" value="1"/>
</dbReference>
<dbReference type="Gene3D" id="1.20.1270.10">
    <property type="match status" value="1"/>
</dbReference>
<dbReference type="Gene3D" id="3.30.420.40">
    <property type="match status" value="2"/>
</dbReference>
<dbReference type="Gene3D" id="3.90.640.10">
    <property type="entry name" value="Actin, Chain A, domain 4"/>
    <property type="match status" value="1"/>
</dbReference>
<dbReference type="Gene3D" id="2.60.34.10">
    <property type="entry name" value="Substrate Binding Domain Of DNAk, Chain A, domain 1"/>
    <property type="match status" value="1"/>
</dbReference>
<dbReference type="HAMAP" id="MF_00332">
    <property type="entry name" value="DnaK"/>
    <property type="match status" value="1"/>
</dbReference>
<dbReference type="InterPro" id="IPR043129">
    <property type="entry name" value="ATPase_NBD"/>
</dbReference>
<dbReference type="InterPro" id="IPR012725">
    <property type="entry name" value="Chaperone_DnaK"/>
</dbReference>
<dbReference type="InterPro" id="IPR018181">
    <property type="entry name" value="Heat_shock_70_CS"/>
</dbReference>
<dbReference type="InterPro" id="IPR029048">
    <property type="entry name" value="HSP70_C_sf"/>
</dbReference>
<dbReference type="InterPro" id="IPR029047">
    <property type="entry name" value="HSP70_peptide-bd_sf"/>
</dbReference>
<dbReference type="InterPro" id="IPR013126">
    <property type="entry name" value="Hsp_70_fam"/>
</dbReference>
<dbReference type="NCBIfam" id="NF001413">
    <property type="entry name" value="PRK00290.1"/>
    <property type="match status" value="1"/>
</dbReference>
<dbReference type="NCBIfam" id="TIGR02350">
    <property type="entry name" value="prok_dnaK"/>
    <property type="match status" value="1"/>
</dbReference>
<dbReference type="PANTHER" id="PTHR19375">
    <property type="entry name" value="HEAT SHOCK PROTEIN 70KDA"/>
    <property type="match status" value="1"/>
</dbReference>
<dbReference type="Pfam" id="PF00012">
    <property type="entry name" value="HSP70"/>
    <property type="match status" value="1"/>
</dbReference>
<dbReference type="PRINTS" id="PR00301">
    <property type="entry name" value="HEATSHOCK70"/>
</dbReference>
<dbReference type="SUPFAM" id="SSF53067">
    <property type="entry name" value="Actin-like ATPase domain"/>
    <property type="match status" value="2"/>
</dbReference>
<dbReference type="SUPFAM" id="SSF100934">
    <property type="entry name" value="Heat shock protein 70kD (HSP70), C-terminal subdomain"/>
    <property type="match status" value="1"/>
</dbReference>
<dbReference type="SUPFAM" id="SSF100920">
    <property type="entry name" value="Heat shock protein 70kD (HSP70), peptide-binding domain"/>
    <property type="match status" value="1"/>
</dbReference>
<dbReference type="PROSITE" id="PS00297">
    <property type="entry name" value="HSP70_1"/>
    <property type="match status" value="1"/>
</dbReference>
<dbReference type="PROSITE" id="PS00329">
    <property type="entry name" value="HSP70_2"/>
    <property type="match status" value="1"/>
</dbReference>
<dbReference type="PROSITE" id="PS01036">
    <property type="entry name" value="HSP70_3"/>
    <property type="match status" value="1"/>
</dbReference>
<organism>
    <name type="scientific">Staphylococcus aureus (strain Mu50 / ATCC 700699)</name>
    <dbReference type="NCBI Taxonomy" id="158878"/>
    <lineage>
        <taxon>Bacteria</taxon>
        <taxon>Bacillati</taxon>
        <taxon>Bacillota</taxon>
        <taxon>Bacilli</taxon>
        <taxon>Bacillales</taxon>
        <taxon>Staphylococcaceae</taxon>
        <taxon>Staphylococcus</taxon>
    </lineage>
</organism>
<proteinExistence type="inferred from homology"/>
<reference key="1">
    <citation type="journal article" date="2001" name="Lancet">
        <title>Whole genome sequencing of meticillin-resistant Staphylococcus aureus.</title>
        <authorList>
            <person name="Kuroda M."/>
            <person name="Ohta T."/>
            <person name="Uchiyama I."/>
            <person name="Baba T."/>
            <person name="Yuzawa H."/>
            <person name="Kobayashi I."/>
            <person name="Cui L."/>
            <person name="Oguchi A."/>
            <person name="Aoki K."/>
            <person name="Nagai Y."/>
            <person name="Lian J.-Q."/>
            <person name="Ito T."/>
            <person name="Kanamori M."/>
            <person name="Matsumaru H."/>
            <person name="Maruyama A."/>
            <person name="Murakami H."/>
            <person name="Hosoyama A."/>
            <person name="Mizutani-Ui Y."/>
            <person name="Takahashi N.K."/>
            <person name="Sawano T."/>
            <person name="Inoue R."/>
            <person name="Kaito C."/>
            <person name="Sekimizu K."/>
            <person name="Hirakawa H."/>
            <person name="Kuhara S."/>
            <person name="Goto S."/>
            <person name="Yabuzaki J."/>
            <person name="Kanehisa M."/>
            <person name="Yamashita A."/>
            <person name="Oshima K."/>
            <person name="Furuya K."/>
            <person name="Yoshino C."/>
            <person name="Shiba T."/>
            <person name="Hattori M."/>
            <person name="Ogasawara N."/>
            <person name="Hayashi H."/>
            <person name="Hiramatsu K."/>
        </authorList>
    </citation>
    <scope>NUCLEOTIDE SEQUENCE [LARGE SCALE GENOMIC DNA]</scope>
    <source>
        <strain>Mu50 / ATCC 700699</strain>
    </source>
</reference>
<accession>P64407</accession>
<accession>Q99TR7</accession>